<keyword id="KW-1003">Cell membrane</keyword>
<keyword id="KW-0472">Membrane</keyword>
<keyword id="KW-0653">Protein transport</keyword>
<keyword id="KW-1185">Reference proteome</keyword>
<keyword id="KW-0811">Translocation</keyword>
<keyword id="KW-0812">Transmembrane</keyword>
<keyword id="KW-1133">Transmembrane helix</keyword>
<keyword id="KW-0813">Transport</keyword>
<protein>
    <recommendedName>
        <fullName evidence="1">Sec-independent protein translocase protein TatCy</fullName>
    </recommendedName>
</protein>
<reference key="1">
    <citation type="journal article" date="1997" name="Microbiology">
        <title>Nucleotide sequence and analysis of the phoB-rrnE-groESL region of the Bacillus subtilis chromosome.</title>
        <authorList>
            <person name="Sadaie Y."/>
            <person name="Yata K."/>
            <person name="Fujita M."/>
            <person name="Sagai H."/>
            <person name="Itaya M."/>
            <person name="Kasahara Y."/>
            <person name="Ogasawara N."/>
        </authorList>
    </citation>
    <scope>NUCLEOTIDE SEQUENCE [GENOMIC DNA]</scope>
    <source>
        <strain>168 / JH642</strain>
    </source>
</reference>
<reference key="2">
    <citation type="journal article" date="1997" name="Nature">
        <title>The complete genome sequence of the Gram-positive bacterium Bacillus subtilis.</title>
        <authorList>
            <person name="Kunst F."/>
            <person name="Ogasawara N."/>
            <person name="Moszer I."/>
            <person name="Albertini A.M."/>
            <person name="Alloni G."/>
            <person name="Azevedo V."/>
            <person name="Bertero M.G."/>
            <person name="Bessieres P."/>
            <person name="Bolotin A."/>
            <person name="Borchert S."/>
            <person name="Borriss R."/>
            <person name="Boursier L."/>
            <person name="Brans A."/>
            <person name="Braun M."/>
            <person name="Brignell S.C."/>
            <person name="Bron S."/>
            <person name="Brouillet S."/>
            <person name="Bruschi C.V."/>
            <person name="Caldwell B."/>
            <person name="Capuano V."/>
            <person name="Carter N.M."/>
            <person name="Choi S.-K."/>
            <person name="Codani J.-J."/>
            <person name="Connerton I.F."/>
            <person name="Cummings N.J."/>
            <person name="Daniel R.A."/>
            <person name="Denizot F."/>
            <person name="Devine K.M."/>
            <person name="Duesterhoeft A."/>
            <person name="Ehrlich S.D."/>
            <person name="Emmerson P.T."/>
            <person name="Entian K.-D."/>
            <person name="Errington J."/>
            <person name="Fabret C."/>
            <person name="Ferrari E."/>
            <person name="Foulger D."/>
            <person name="Fritz C."/>
            <person name="Fujita M."/>
            <person name="Fujita Y."/>
            <person name="Fuma S."/>
            <person name="Galizzi A."/>
            <person name="Galleron N."/>
            <person name="Ghim S.-Y."/>
            <person name="Glaser P."/>
            <person name="Goffeau A."/>
            <person name="Golightly E.J."/>
            <person name="Grandi G."/>
            <person name="Guiseppi G."/>
            <person name="Guy B.J."/>
            <person name="Haga K."/>
            <person name="Haiech J."/>
            <person name="Harwood C.R."/>
            <person name="Henaut A."/>
            <person name="Hilbert H."/>
            <person name="Holsappel S."/>
            <person name="Hosono S."/>
            <person name="Hullo M.-F."/>
            <person name="Itaya M."/>
            <person name="Jones L.-M."/>
            <person name="Joris B."/>
            <person name="Karamata D."/>
            <person name="Kasahara Y."/>
            <person name="Klaerr-Blanchard M."/>
            <person name="Klein C."/>
            <person name="Kobayashi Y."/>
            <person name="Koetter P."/>
            <person name="Koningstein G."/>
            <person name="Krogh S."/>
            <person name="Kumano M."/>
            <person name="Kurita K."/>
            <person name="Lapidus A."/>
            <person name="Lardinois S."/>
            <person name="Lauber J."/>
            <person name="Lazarevic V."/>
            <person name="Lee S.-M."/>
            <person name="Levine A."/>
            <person name="Liu H."/>
            <person name="Masuda S."/>
            <person name="Mauel C."/>
            <person name="Medigue C."/>
            <person name="Medina N."/>
            <person name="Mellado R.P."/>
            <person name="Mizuno M."/>
            <person name="Moestl D."/>
            <person name="Nakai S."/>
            <person name="Noback M."/>
            <person name="Noone D."/>
            <person name="O'Reilly M."/>
            <person name="Ogawa K."/>
            <person name="Ogiwara A."/>
            <person name="Oudega B."/>
            <person name="Park S.-H."/>
            <person name="Parro V."/>
            <person name="Pohl T.M."/>
            <person name="Portetelle D."/>
            <person name="Porwollik S."/>
            <person name="Prescott A.M."/>
            <person name="Presecan E."/>
            <person name="Pujic P."/>
            <person name="Purnelle B."/>
            <person name="Rapoport G."/>
            <person name="Rey M."/>
            <person name="Reynolds S."/>
            <person name="Rieger M."/>
            <person name="Rivolta C."/>
            <person name="Rocha E."/>
            <person name="Roche B."/>
            <person name="Rose M."/>
            <person name="Sadaie Y."/>
            <person name="Sato T."/>
            <person name="Scanlan E."/>
            <person name="Schleich S."/>
            <person name="Schroeter R."/>
            <person name="Scoffone F."/>
            <person name="Sekiguchi J."/>
            <person name="Sekowska A."/>
            <person name="Seror S.J."/>
            <person name="Serror P."/>
            <person name="Shin B.-S."/>
            <person name="Soldo B."/>
            <person name="Sorokin A."/>
            <person name="Tacconi E."/>
            <person name="Takagi T."/>
            <person name="Takahashi H."/>
            <person name="Takemaru K."/>
            <person name="Takeuchi M."/>
            <person name="Tamakoshi A."/>
            <person name="Tanaka T."/>
            <person name="Terpstra P."/>
            <person name="Tognoni A."/>
            <person name="Tosato V."/>
            <person name="Uchiyama S."/>
            <person name="Vandenbol M."/>
            <person name="Vannier F."/>
            <person name="Vassarotti A."/>
            <person name="Viari A."/>
            <person name="Wambutt R."/>
            <person name="Wedler E."/>
            <person name="Wedler H."/>
            <person name="Weitzenegger T."/>
            <person name="Winters P."/>
            <person name="Wipat A."/>
            <person name="Yamamoto H."/>
            <person name="Yamane K."/>
            <person name="Yasumoto K."/>
            <person name="Yata K."/>
            <person name="Yoshida K."/>
            <person name="Yoshikawa H.-F."/>
            <person name="Zumstein E."/>
            <person name="Yoshikawa H."/>
            <person name="Danchin A."/>
        </authorList>
    </citation>
    <scope>NUCLEOTIDE SEQUENCE [LARGE SCALE GENOMIC DNA]</scope>
    <source>
        <strain>168</strain>
    </source>
</reference>
<reference key="3">
    <citation type="journal article" date="2000" name="J. Biol. Chem.">
        <title>TatC is a specificity determinant for protein secretion via the twin-arginine translocation pathway.</title>
        <authorList>
            <person name="Jongbloed J.D.H."/>
            <person name="Martin U."/>
            <person name="Antelmann H."/>
            <person name="Hecker M."/>
            <person name="Tjalsma H."/>
            <person name="Venema G."/>
            <person name="Bron S."/>
            <person name="van Dijl J.M."/>
            <person name="Mueller J."/>
        </authorList>
    </citation>
    <scope>IDENTIFICATION OF THE TAT GENES</scope>
</reference>
<reference key="4">
    <citation type="journal article" date="2004" name="Mol. Microbiol.">
        <title>Two minimal Tat translocases in Bacillus.</title>
        <authorList>
            <person name="Jongbloed J.D.H."/>
            <person name="Grieger U."/>
            <person name="Antelmann H."/>
            <person name="Hecker M."/>
            <person name="Nijland R."/>
            <person name="Bron S."/>
            <person name="van Dijl J.M."/>
        </authorList>
    </citation>
    <scope>EXPORT OF THE YWBN PROTEIN</scope>
    <scope>CHARACTERIZATION OF THE TWO TAT TRANSLOCASE SYSTEMS</scope>
</reference>
<reference key="5">
    <citation type="journal article" date="2009" name="FEBS J.">
        <title>The twin-arginine translocation (Tat) systems from Bacillus subtilis display a conserved mode of complex organization and similar substrate recognition requirements.</title>
        <authorList>
            <person name="Barnett J.P."/>
            <person name="van der Ploeg R."/>
            <person name="Eijlander R.T."/>
            <person name="Nenninger A."/>
            <person name="Mendel S."/>
            <person name="Rozeboom R."/>
            <person name="Kuipers O.P."/>
            <person name="van Dijl J.M."/>
            <person name="Robinson C."/>
        </authorList>
    </citation>
    <scope>FUNCTION</scope>
    <scope>SUBCELLULAR LOCATION</scope>
</reference>
<proteinExistence type="evidence at protein level"/>
<dbReference type="EMBL" id="D88802">
    <property type="protein sequence ID" value="BAA19723.1"/>
    <property type="molecule type" value="Genomic_DNA"/>
</dbReference>
<dbReference type="EMBL" id="AL009126">
    <property type="protein sequence ID" value="CAB12418.1"/>
    <property type="molecule type" value="Genomic_DNA"/>
</dbReference>
<dbReference type="PIR" id="C69787">
    <property type="entry name" value="C69787"/>
</dbReference>
<dbReference type="RefSeq" id="NP_388480.1">
    <property type="nucleotide sequence ID" value="NC_000964.3"/>
</dbReference>
<dbReference type="SMR" id="O05523"/>
<dbReference type="FunCoup" id="O05523">
    <property type="interactions" value="521"/>
</dbReference>
<dbReference type="IntAct" id="O05523">
    <property type="interactions" value="22"/>
</dbReference>
<dbReference type="STRING" id="224308.BSU05990"/>
<dbReference type="TCDB" id="2.A.64.3.2">
    <property type="family name" value="the twin arginine targeting (tat) family"/>
</dbReference>
<dbReference type="PaxDb" id="224308-BSU05990"/>
<dbReference type="EnsemblBacteria" id="CAB12418">
    <property type="protein sequence ID" value="CAB12418"/>
    <property type="gene ID" value="BSU_05990"/>
</dbReference>
<dbReference type="GeneID" id="938010"/>
<dbReference type="KEGG" id="bsu:BSU05990"/>
<dbReference type="PATRIC" id="fig|224308.43.peg.629"/>
<dbReference type="eggNOG" id="COG0805">
    <property type="taxonomic scope" value="Bacteria"/>
</dbReference>
<dbReference type="InParanoid" id="O05523"/>
<dbReference type="OrthoDB" id="9777044at2"/>
<dbReference type="PhylomeDB" id="O05523"/>
<dbReference type="BioCyc" id="BSUB:BSU05990-MONOMER"/>
<dbReference type="Proteomes" id="UP000001570">
    <property type="component" value="Chromosome"/>
</dbReference>
<dbReference type="GO" id="GO:0033281">
    <property type="term" value="C:TAT protein transport complex"/>
    <property type="evidence" value="ECO:0000318"/>
    <property type="project" value="GO_Central"/>
</dbReference>
<dbReference type="GO" id="GO:0009977">
    <property type="term" value="F:proton motive force dependent protein transmembrane transporter activity"/>
    <property type="evidence" value="ECO:0000318"/>
    <property type="project" value="GO_Central"/>
</dbReference>
<dbReference type="GO" id="GO:0065002">
    <property type="term" value="P:intracellular protein transmembrane transport"/>
    <property type="evidence" value="ECO:0000318"/>
    <property type="project" value="GO_Central"/>
</dbReference>
<dbReference type="GO" id="GO:0043953">
    <property type="term" value="P:protein transport by the Tat complex"/>
    <property type="evidence" value="ECO:0000318"/>
    <property type="project" value="GO_Central"/>
</dbReference>
<dbReference type="HAMAP" id="MF_00902">
    <property type="entry name" value="TatC"/>
    <property type="match status" value="1"/>
</dbReference>
<dbReference type="InterPro" id="IPR019820">
    <property type="entry name" value="Sec-indep_translocase_CS"/>
</dbReference>
<dbReference type="InterPro" id="IPR002033">
    <property type="entry name" value="TatC"/>
</dbReference>
<dbReference type="NCBIfam" id="TIGR00945">
    <property type="entry name" value="tatC"/>
    <property type="match status" value="1"/>
</dbReference>
<dbReference type="PANTHER" id="PTHR30371">
    <property type="entry name" value="SEC-INDEPENDENT PROTEIN TRANSLOCASE PROTEIN TATC"/>
    <property type="match status" value="1"/>
</dbReference>
<dbReference type="PANTHER" id="PTHR30371:SF0">
    <property type="entry name" value="SEC-INDEPENDENT PROTEIN TRANSLOCASE PROTEIN TATC, CHLOROPLASTIC-RELATED"/>
    <property type="match status" value="1"/>
</dbReference>
<dbReference type="Pfam" id="PF00902">
    <property type="entry name" value="TatC"/>
    <property type="match status" value="1"/>
</dbReference>
<dbReference type="PRINTS" id="PR01840">
    <property type="entry name" value="TATCFAMILY"/>
</dbReference>
<dbReference type="PROSITE" id="PS01218">
    <property type="entry name" value="TATC"/>
    <property type="match status" value="1"/>
</dbReference>
<accession>O05523</accession>
<evidence type="ECO:0000255" key="1">
    <source>
        <dbReference type="HAMAP-Rule" id="MF_00902"/>
    </source>
</evidence>
<evidence type="ECO:0000269" key="2">
    <source>
    </source>
</evidence>
<comment type="function">
    <text evidence="1 2">Part of the twin-arginine translocation (Tat) system that transports large folded proteins containing a characteristic twin-arginine motif in their signal peptide across membranes. Required for YwbN secretion.</text>
</comment>
<comment type="subunit">
    <text>Forms a complex with TatAy. Two types of complexes exist: one composed of TatAy and TatCy, and another composed only of TatAy.</text>
</comment>
<comment type="subcellular location">
    <subcellularLocation>
        <location evidence="1 2">Cell membrane</location>
        <topology evidence="1 2">Multi-pass membrane protein</topology>
    </subcellularLocation>
</comment>
<comment type="miscellaneous">
    <text>B.subtilis possesses two minimal, substrate-specific, Tat translocases: TatAd-TatCd and TatAy-TatCy, each one composed of a TatA and a TatC protein. TatA is bifunctional and performs the function of both the TatA and TatB proteins of Gram-negative organisms.</text>
</comment>
<comment type="similarity">
    <text evidence="1">Belongs to the TatC family.</text>
</comment>
<organism>
    <name type="scientific">Bacillus subtilis (strain 168)</name>
    <dbReference type="NCBI Taxonomy" id="224308"/>
    <lineage>
        <taxon>Bacteria</taxon>
        <taxon>Bacillati</taxon>
        <taxon>Bacillota</taxon>
        <taxon>Bacilli</taxon>
        <taxon>Bacillales</taxon>
        <taxon>Bacillaceae</taxon>
        <taxon>Bacillus</taxon>
    </lineage>
</organism>
<name>TATCY_BACSU</name>
<feature type="chain" id="PRO_0000098096" description="Sec-independent protein translocase protein TatCy">
    <location>
        <begin position="1"/>
        <end position="254"/>
    </location>
</feature>
<feature type="transmembrane region" description="Helical" evidence="1">
    <location>
        <begin position="24"/>
        <end position="44"/>
    </location>
</feature>
<feature type="transmembrane region" description="Helical" evidence="1">
    <location>
        <begin position="67"/>
        <end position="87"/>
    </location>
</feature>
<feature type="transmembrane region" description="Helical" evidence="1">
    <location>
        <begin position="112"/>
        <end position="132"/>
    </location>
</feature>
<feature type="transmembrane region" description="Helical" evidence="1">
    <location>
        <begin position="157"/>
        <end position="177"/>
    </location>
</feature>
<feature type="transmembrane region" description="Helical" evidence="1">
    <location>
        <begin position="187"/>
        <end position="207"/>
    </location>
</feature>
<feature type="transmembrane region" description="Helical" evidence="1">
    <location>
        <begin position="212"/>
        <end position="232"/>
    </location>
</feature>
<gene>
    <name evidence="1" type="primary">tatC2</name>
    <name type="synonym">tatCy</name>
    <name type="synonym">ydiJ</name>
    <name type="ordered locus">BSU05990</name>
</gene>
<sequence length="254" mass="29056">MTRMKVNQMSLLEHIAELRKRLLIVALAFVVFFIAGFFLAKPIIVYLQETDEAKQLTLNAFNLTDPLYVFMQFAFIIGIVLTSPVILYQLWAFVSPGLYEKERKVTLSYIPVSILLFLAGLSFSYYILFPFVVDFMKRISQDLNVNQVIGINEYFHFLLQLTIPFGLLFQMPVILMFLTRLGIVTPMFLAKIRKYAYFTLLVIAALITPPELLSHMMVTVPLLILYEISILISKAAYRKAQKSSAADRDVSSGQ</sequence>